<name>COABC_METJA</name>
<feature type="chain" id="PRO_0000232696" description="Coenzyme A biosynthesis bifunctional protein CoaBC">
    <location>
        <begin position="1"/>
        <end position="403"/>
    </location>
</feature>
<feature type="region of interest" description="Phosphopantothenoylcysteine decarboxylase" evidence="2">
    <location>
        <begin position="1"/>
        <end position="197"/>
    </location>
</feature>
<feature type="region of interest" description="Phosphopantothenate--cysteine ligase" evidence="2">
    <location>
        <begin position="198"/>
        <end position="403"/>
    </location>
</feature>
<feature type="binding site" evidence="2">
    <location>
        <position position="285"/>
    </location>
    <ligand>
        <name>CTP</name>
        <dbReference type="ChEBI" id="CHEBI:37563"/>
    </ligand>
</feature>
<feature type="binding site" evidence="2">
    <location>
        <position position="294"/>
    </location>
    <ligand>
        <name>CTP</name>
        <dbReference type="ChEBI" id="CHEBI:37563"/>
    </ligand>
</feature>
<feature type="binding site" evidence="2">
    <location>
        <position position="327"/>
    </location>
    <ligand>
        <name>CTP</name>
        <dbReference type="ChEBI" id="CHEBI:37563"/>
    </ligand>
</feature>
<feature type="mutagenesis site" description="Loss of PPC decarboxylase activity." evidence="3">
    <original>H</original>
    <variation>A</variation>
    <location>
        <position position="87"/>
    </location>
</feature>
<feature type="mutagenesis site" description="Strong decrease in PPC decarboxylase activity." evidence="3">
    <original>H</original>
    <variation>N</variation>
    <location>
        <position position="87"/>
    </location>
</feature>
<feature type="mutagenesis site" description="No change in PPC decarboxylase activity." evidence="3">
    <original>H</original>
    <variation>A</variation>
    <location>
        <position position="139"/>
    </location>
</feature>
<feature type="mutagenesis site" description="Strong decrease in PPC decarboxylase activity." evidence="3">
    <original>H</original>
    <variation>D</variation>
    <variation>N</variation>
    <location>
        <position position="139"/>
    </location>
</feature>
<feature type="mutagenesis site" description="No change in PPC decarboxylase activity." evidence="3">
    <original>N</original>
    <variation>D</variation>
    <location>
        <position position="141"/>
    </location>
</feature>
<feature type="mutagenesis site" description="No change in PPC decarboxylase activity." evidence="3">
    <original>E</original>
    <variation>A</variation>
    <location>
        <position position="167"/>
    </location>
</feature>
<feature type="mutagenesis site" description="Strong decrease in PPC decarboxylase activity." evidence="3">
    <original>E</original>
    <variation>A</variation>
    <variation>D</variation>
    <variation>K</variation>
    <location>
        <position position="168"/>
    </location>
</feature>
<feature type="mutagenesis site" description="Shows only residual PPC synthetase activity." evidence="3">
    <original>N</original>
    <variation>H</variation>
    <location>
        <position position="217"/>
    </location>
</feature>
<feature type="mutagenesis site" description="Shows very low PPC synthetase activity." evidence="3">
    <original>K</original>
    <variation>Q</variation>
    <location>
        <position position="310"/>
    </location>
</feature>
<dbReference type="EC" id="4.1.1.36" evidence="2 3"/>
<dbReference type="EC" id="6.3.2.5" evidence="2 3"/>
<dbReference type="EMBL" id="L77117">
    <property type="protein sequence ID" value="AAB98918.1"/>
    <property type="molecule type" value="Genomic_DNA"/>
</dbReference>
<dbReference type="PIR" id="A64414">
    <property type="entry name" value="A64414"/>
</dbReference>
<dbReference type="SMR" id="Q58323"/>
<dbReference type="FunCoup" id="Q58323">
    <property type="interactions" value="204"/>
</dbReference>
<dbReference type="STRING" id="243232.MJ_0913"/>
<dbReference type="PaxDb" id="243232-MJ_0913"/>
<dbReference type="EnsemblBacteria" id="AAB98918">
    <property type="protein sequence ID" value="AAB98918"/>
    <property type="gene ID" value="MJ_0913"/>
</dbReference>
<dbReference type="KEGG" id="mja:MJ_0913"/>
<dbReference type="eggNOG" id="arCOG01704">
    <property type="taxonomic scope" value="Archaea"/>
</dbReference>
<dbReference type="HOGENOM" id="CLU_033319_0_3_2"/>
<dbReference type="InParanoid" id="Q58323"/>
<dbReference type="PhylomeDB" id="Q58323"/>
<dbReference type="BioCyc" id="MetaCyc:MONOMER-21896"/>
<dbReference type="BRENDA" id="6.3.2.5">
    <property type="organism ID" value="3260"/>
</dbReference>
<dbReference type="UniPathway" id="UPA00241"/>
<dbReference type="Proteomes" id="UP000000805">
    <property type="component" value="Chromosome"/>
</dbReference>
<dbReference type="GO" id="GO:0071513">
    <property type="term" value="C:phosphopantothenoylcysteine decarboxylase complex"/>
    <property type="evidence" value="ECO:0000318"/>
    <property type="project" value="GO_Central"/>
</dbReference>
<dbReference type="GO" id="GO:0010181">
    <property type="term" value="F:FMN binding"/>
    <property type="evidence" value="ECO:0000318"/>
    <property type="project" value="GO_Central"/>
</dbReference>
<dbReference type="GO" id="GO:0046872">
    <property type="term" value="F:metal ion binding"/>
    <property type="evidence" value="ECO:0007669"/>
    <property type="project" value="UniProtKB-KW"/>
</dbReference>
<dbReference type="GO" id="GO:0004632">
    <property type="term" value="F:phosphopantothenate--cysteine ligase activity"/>
    <property type="evidence" value="ECO:0007669"/>
    <property type="project" value="UniProtKB-UniRule"/>
</dbReference>
<dbReference type="GO" id="GO:0004633">
    <property type="term" value="F:phosphopantothenoylcysteine decarboxylase activity"/>
    <property type="evidence" value="ECO:0000318"/>
    <property type="project" value="GO_Central"/>
</dbReference>
<dbReference type="GO" id="GO:0015937">
    <property type="term" value="P:coenzyme A biosynthetic process"/>
    <property type="evidence" value="ECO:0000318"/>
    <property type="project" value="GO_Central"/>
</dbReference>
<dbReference type="GO" id="GO:0015941">
    <property type="term" value="P:pantothenate catabolic process"/>
    <property type="evidence" value="ECO:0007669"/>
    <property type="project" value="InterPro"/>
</dbReference>
<dbReference type="Gene3D" id="3.40.50.10300">
    <property type="entry name" value="CoaB-like"/>
    <property type="match status" value="1"/>
</dbReference>
<dbReference type="Gene3D" id="3.40.50.1950">
    <property type="entry name" value="Flavin prenyltransferase-like"/>
    <property type="match status" value="1"/>
</dbReference>
<dbReference type="HAMAP" id="MF_02225">
    <property type="entry name" value="CoaBC"/>
    <property type="match status" value="1"/>
</dbReference>
<dbReference type="InterPro" id="IPR035929">
    <property type="entry name" value="CoaB-like_sf"/>
</dbReference>
<dbReference type="InterPro" id="IPR005252">
    <property type="entry name" value="CoaBC"/>
</dbReference>
<dbReference type="InterPro" id="IPR007085">
    <property type="entry name" value="DNA/pantothenate-metab_flavo_C"/>
</dbReference>
<dbReference type="InterPro" id="IPR036551">
    <property type="entry name" value="Flavin_trans-like"/>
</dbReference>
<dbReference type="InterPro" id="IPR003382">
    <property type="entry name" value="Flavoprotein"/>
</dbReference>
<dbReference type="NCBIfam" id="TIGR00521">
    <property type="entry name" value="coaBC_dfp"/>
    <property type="match status" value="1"/>
</dbReference>
<dbReference type="PANTHER" id="PTHR14359">
    <property type="entry name" value="HOMO-OLIGOMERIC FLAVIN CONTAINING CYS DECARBOXYLASE FAMILY"/>
    <property type="match status" value="1"/>
</dbReference>
<dbReference type="PANTHER" id="PTHR14359:SF6">
    <property type="entry name" value="PHOSPHOPANTOTHENOYLCYSTEINE DECARBOXYLASE"/>
    <property type="match status" value="1"/>
</dbReference>
<dbReference type="Pfam" id="PF04127">
    <property type="entry name" value="DFP"/>
    <property type="match status" value="1"/>
</dbReference>
<dbReference type="Pfam" id="PF02441">
    <property type="entry name" value="Flavoprotein"/>
    <property type="match status" value="1"/>
</dbReference>
<dbReference type="SUPFAM" id="SSF102645">
    <property type="entry name" value="CoaB-like"/>
    <property type="match status" value="1"/>
</dbReference>
<dbReference type="SUPFAM" id="SSF52507">
    <property type="entry name" value="Homo-oligomeric flavin-containing Cys decarboxylases, HFCD"/>
    <property type="match status" value="1"/>
</dbReference>
<organism>
    <name type="scientific">Methanocaldococcus jannaschii (strain ATCC 43067 / DSM 2661 / JAL-1 / JCM 10045 / NBRC 100440)</name>
    <name type="common">Methanococcus jannaschii</name>
    <dbReference type="NCBI Taxonomy" id="243232"/>
    <lineage>
        <taxon>Archaea</taxon>
        <taxon>Methanobacteriati</taxon>
        <taxon>Methanobacteriota</taxon>
        <taxon>Methanomada group</taxon>
        <taxon>Methanococci</taxon>
        <taxon>Methanococcales</taxon>
        <taxon>Methanocaldococcaceae</taxon>
        <taxon>Methanocaldococcus</taxon>
    </lineage>
</organism>
<proteinExistence type="evidence at protein level"/>
<sequence length="403" mass="45671">MISEIMHPTKLLKGTKSKLLENKKILVAVTSSIAAIETPKLMRELIRHGAEVYCIITEETKKIIGKEALKFGCGNEVYEEITGDIEHILLYNECDCLLIYPATANIISKINLGIADNIVNTTALMFFGNKPIFIVPAMHENMFNAIKRHIDKLKEKDKIYIISPKFEEGKAKVANIEDVVKAVIEKIGNNLKKEGNRVLILNGGTVEFIDKVRVISNLSSGKMGVALAEAFCKEGFYVEVITAMGLEPPYYIKNHKVLTAKEMLNKAIELAKDFDIIISSAAISDFTVESFEGKLSSEEELILKLKRNPKVLEELRRIYKDKVIIGFKAEYNLDEKELINRAKERLNKYNLNMIIANDLSKHYFGDDYIEVYIITKYEVEKISGSKKEISERIVEKVKKLVKS</sequence>
<protein>
    <recommendedName>
        <fullName evidence="2 5">Coenzyme A biosynthesis bifunctional protein CoaBC</fullName>
    </recommendedName>
    <alternativeName>
        <fullName evidence="2 5">DNA/pantothenate metabolism flavoprotein</fullName>
    </alternativeName>
    <alternativeName>
        <fullName evidence="2">Phosphopantothenoylcysteine synthetase/decarboxylase</fullName>
        <shortName evidence="2">PPCS-PPCDC</shortName>
    </alternativeName>
    <domain>
        <recommendedName>
            <fullName evidence="2 4">Phosphopantothenoylcysteine decarboxylase</fullName>
            <shortName evidence="2 4">PPC decarboxylase</shortName>
            <shortName evidence="2 5">PPC-DC</shortName>
            <ecNumber evidence="2 3">4.1.1.36</ecNumber>
        </recommendedName>
        <alternativeName>
            <fullName evidence="2 4">CoaC</fullName>
        </alternativeName>
    </domain>
    <domain>
        <recommendedName>
            <fullName evidence="2 5">Phosphopantothenate--cysteine ligase</fullName>
            <ecNumber evidence="2 3">6.3.2.5</ecNumber>
        </recommendedName>
        <alternativeName>
            <fullName evidence="2 4">CoaB</fullName>
        </alternativeName>
        <alternativeName>
            <fullName evidence="2 4">Phosphopantothenoylcysteine synthetase</fullName>
            <shortName evidence="2 4">PPC synthetase</shortName>
            <shortName evidence="2 5">PPC-S</shortName>
        </alternativeName>
    </domain>
</protein>
<keyword id="KW-0210">Decarboxylase</keyword>
<keyword id="KW-0285">Flavoprotein</keyword>
<keyword id="KW-0288">FMN</keyword>
<keyword id="KW-0436">Ligase</keyword>
<keyword id="KW-0456">Lyase</keyword>
<keyword id="KW-0460">Magnesium</keyword>
<keyword id="KW-0479">Metal-binding</keyword>
<keyword id="KW-0511">Multifunctional enzyme</keyword>
<keyword id="KW-1185">Reference proteome</keyword>
<evidence type="ECO:0000250" key="1">
    <source>
        <dbReference type="UniProtKB" id="P0ABQ0"/>
    </source>
</evidence>
<evidence type="ECO:0000255" key="2">
    <source>
        <dbReference type="HAMAP-Rule" id="MF_02225"/>
    </source>
</evidence>
<evidence type="ECO:0000269" key="3">
    <source>
    </source>
</evidence>
<evidence type="ECO:0000303" key="4">
    <source>
    </source>
</evidence>
<evidence type="ECO:0000305" key="5"/>
<accession>Q58323</accession>
<gene>
    <name evidence="2" type="primary">coaBC</name>
    <name evidence="4" type="synonym">dfp</name>
    <name type="ordered locus">MJ0913</name>
</gene>
<reference key="1">
    <citation type="journal article" date="1996" name="Science">
        <title>Complete genome sequence of the methanogenic archaeon, Methanococcus jannaschii.</title>
        <authorList>
            <person name="Bult C.J."/>
            <person name="White O."/>
            <person name="Olsen G.J."/>
            <person name="Zhou L."/>
            <person name="Fleischmann R.D."/>
            <person name="Sutton G.G."/>
            <person name="Blake J.A."/>
            <person name="FitzGerald L.M."/>
            <person name="Clayton R.A."/>
            <person name="Gocayne J.D."/>
            <person name="Kerlavage A.R."/>
            <person name="Dougherty B.A."/>
            <person name="Tomb J.-F."/>
            <person name="Adams M.D."/>
            <person name="Reich C.I."/>
            <person name="Overbeek R."/>
            <person name="Kirkness E.F."/>
            <person name="Weinstock K.G."/>
            <person name="Merrick J.M."/>
            <person name="Glodek A."/>
            <person name="Scott J.L."/>
            <person name="Geoghagen N.S.M."/>
            <person name="Weidman J.F."/>
            <person name="Fuhrmann J.L."/>
            <person name="Nguyen D."/>
            <person name="Utterback T.R."/>
            <person name="Kelley J.M."/>
            <person name="Peterson J.D."/>
            <person name="Sadow P.W."/>
            <person name="Hanna M.C."/>
            <person name="Cotton M.D."/>
            <person name="Roberts K.M."/>
            <person name="Hurst M.A."/>
            <person name="Kaine B.P."/>
            <person name="Borodovsky M."/>
            <person name="Klenk H.-P."/>
            <person name="Fraser C.M."/>
            <person name="Smith H.O."/>
            <person name="Woese C.R."/>
            <person name="Venter J.C."/>
        </authorList>
    </citation>
    <scope>NUCLEOTIDE SEQUENCE [LARGE SCALE GENOMIC DNA]</scope>
    <source>
        <strain>ATCC 43067 / DSM 2661 / JAL-1 / JCM 10045 / NBRC 100440</strain>
    </source>
</reference>
<reference key="2">
    <citation type="journal article" date="2006" name="J. Biol. Chem.">
        <title>4'-phosphopantetheine biosynthesis in Archaea.</title>
        <authorList>
            <person name="Kupke T."/>
            <person name="Schwarz W."/>
        </authorList>
    </citation>
    <scope>FUNCTION</scope>
    <scope>CATALYTIC ACTIVITY</scope>
    <scope>COFACTOR</scope>
    <scope>PATHWAY</scope>
    <scope>SUBUNIT</scope>
    <scope>MUTAGENESIS OF HIS-87; HIS-139; ASN-141; GLU-167; GLU-168; ASN-217 AND LYS-310</scope>
    <source>
        <strain>ATCC 43067 / DSM 2661 / JAL-1 / JCM 10045 / NBRC 100440</strain>
    </source>
</reference>
<comment type="function">
    <text evidence="2 3">Catalyzes two sequential steps in the biosynthesis of coenzyme A. In the first step cysteine is conjugated to 4'-phosphopantothenate to form 4-phosphopantothenoylcysteine. In the second step the latter compound is decarboxylated to form 4'-phosphopantotheine.</text>
</comment>
<comment type="catalytic activity">
    <reaction evidence="2 3">
        <text>N-[(R)-4-phosphopantothenoyl]-L-cysteine + H(+) = (R)-4'-phosphopantetheine + CO2</text>
        <dbReference type="Rhea" id="RHEA:16793"/>
        <dbReference type="ChEBI" id="CHEBI:15378"/>
        <dbReference type="ChEBI" id="CHEBI:16526"/>
        <dbReference type="ChEBI" id="CHEBI:59458"/>
        <dbReference type="ChEBI" id="CHEBI:61723"/>
        <dbReference type="EC" id="4.1.1.36"/>
    </reaction>
</comment>
<comment type="catalytic activity">
    <reaction evidence="2 3">
        <text>(R)-4'-phosphopantothenate + L-cysteine + CTP = N-[(R)-4-phosphopantothenoyl]-L-cysteine + CMP + diphosphate + H(+)</text>
        <dbReference type="Rhea" id="RHEA:19397"/>
        <dbReference type="ChEBI" id="CHEBI:10986"/>
        <dbReference type="ChEBI" id="CHEBI:15378"/>
        <dbReference type="ChEBI" id="CHEBI:33019"/>
        <dbReference type="ChEBI" id="CHEBI:35235"/>
        <dbReference type="ChEBI" id="CHEBI:37563"/>
        <dbReference type="ChEBI" id="CHEBI:59458"/>
        <dbReference type="ChEBI" id="CHEBI:60377"/>
        <dbReference type="EC" id="6.3.2.5"/>
    </reaction>
</comment>
<comment type="cofactor">
    <cofactor evidence="1 2">
        <name>Mg(2+)</name>
        <dbReference type="ChEBI" id="CHEBI:18420"/>
    </cofactor>
</comment>
<comment type="cofactor">
    <cofactor evidence="2 3">
        <name>FMN</name>
        <dbReference type="ChEBI" id="CHEBI:58210"/>
    </cofactor>
    <text evidence="1 2">Binds 1 FMN per subunit.</text>
</comment>
<comment type="pathway">
    <text evidence="2 3">Cofactor biosynthesis; coenzyme A biosynthesis.</text>
</comment>
<comment type="subunit">
    <text evidence="3">Homododecamer. The CoaC domain is responsible for dodecamer formation.</text>
</comment>
<comment type="similarity">
    <text evidence="2 5">In the N-terminal section; belongs to the HFCD (homo-oligomeric flavin containing Cys decarboxylase) superfamily.</text>
</comment>
<comment type="similarity">
    <text evidence="2 5">In the C-terminal section; belongs to the PPC synthetase family.</text>
</comment>